<accession>Q6N4R5</accession>
<feature type="initiator methionine" description="Removed">
    <location>
        <position position="1"/>
    </location>
</feature>
<feature type="chain" id="PRO_0000125721" description="Large ribosomal subunit protein uL1">
    <location>
        <begin position="2"/>
        <end position="229"/>
    </location>
</feature>
<reference key="1">
    <citation type="journal article" date="2004" name="Nat. Biotechnol.">
        <title>Complete genome sequence of the metabolically versatile photosynthetic bacterium Rhodopseudomonas palustris.</title>
        <authorList>
            <person name="Larimer F.W."/>
            <person name="Chain P."/>
            <person name="Hauser L."/>
            <person name="Lamerdin J.E."/>
            <person name="Malfatti S."/>
            <person name="Do L."/>
            <person name="Land M.L."/>
            <person name="Pelletier D.A."/>
            <person name="Beatty J.T."/>
            <person name="Lang A.S."/>
            <person name="Tabita F.R."/>
            <person name="Gibson J.L."/>
            <person name="Hanson T.E."/>
            <person name="Bobst C."/>
            <person name="Torres y Torres J.L."/>
            <person name="Peres C."/>
            <person name="Harrison F.H."/>
            <person name="Gibson J."/>
            <person name="Harwood C.S."/>
        </authorList>
    </citation>
    <scope>NUCLEOTIDE SEQUENCE [LARGE SCALE GENOMIC DNA]</scope>
    <source>
        <strain>ATCC BAA-98 / CGA009</strain>
    </source>
</reference>
<reference key="2">
    <citation type="journal article" date="2004" name="J. Proteome Res.">
        <title>Characterization of the 70S ribosome from Rhodopseudomonas palustris using an integrated 'top-down' and 'bottom-up' mass spectrometric approach.</title>
        <authorList>
            <person name="Strader M.B."/>
            <person name="VerBerkmoes N.C."/>
            <person name="Tabb D.L."/>
            <person name="Connelly H.M."/>
            <person name="Barton J.W."/>
            <person name="Bruce B.D."/>
            <person name="Pelletier D.A."/>
            <person name="Davison B.H."/>
            <person name="Hettich R.L."/>
            <person name="Larimer F.W."/>
            <person name="Hurst G.B."/>
        </authorList>
    </citation>
    <scope>MASS SPECTROMETRY</scope>
    <source>
        <strain>ATCC BAA-98 / CGA009</strain>
    </source>
</reference>
<proteinExistence type="evidence at protein level"/>
<name>RL1_RHOPA</name>
<organism>
    <name type="scientific">Rhodopseudomonas palustris (strain ATCC BAA-98 / CGA009)</name>
    <dbReference type="NCBI Taxonomy" id="258594"/>
    <lineage>
        <taxon>Bacteria</taxon>
        <taxon>Pseudomonadati</taxon>
        <taxon>Pseudomonadota</taxon>
        <taxon>Alphaproteobacteria</taxon>
        <taxon>Hyphomicrobiales</taxon>
        <taxon>Nitrobacteraceae</taxon>
        <taxon>Rhodopseudomonas</taxon>
    </lineage>
</organism>
<keyword id="KW-0678">Repressor</keyword>
<keyword id="KW-0687">Ribonucleoprotein</keyword>
<keyword id="KW-0689">Ribosomal protein</keyword>
<keyword id="KW-0694">RNA-binding</keyword>
<keyword id="KW-0699">rRNA-binding</keyword>
<keyword id="KW-0810">Translation regulation</keyword>
<keyword id="KW-0820">tRNA-binding</keyword>
<protein>
    <recommendedName>
        <fullName evidence="1">Large ribosomal subunit protein uL1</fullName>
    </recommendedName>
    <alternativeName>
        <fullName evidence="3">50S ribosomal protein L1</fullName>
    </alternativeName>
    <alternativeName>
        <fullName>RRP-L1</fullName>
    </alternativeName>
</protein>
<sequence length="229" mass="24010">MAIGKRLKKIREGIDRTKLYPLDEAVKLVKERAISKFDETIEVAINLGVDPRHADQMVRGVVMLPNGTGRTVRVGVFARGAKADEAKAAGADVVGAEDLVEQVQAGNINFDRCIATPDMMPLVGRLGKVLGPRGMMPNPKIGTVTMDVAGAVKGAKGGSVEFRVEKAGIIQAGVGKASFDADKLVENIKALADAVNKAKPSGAKGTYIQRVAVSSTMGPGVKVEPGTVH</sequence>
<comment type="function">
    <text evidence="1">Binds directly to 23S rRNA. The L1 stalk is quite mobile in the ribosome, and is involved in E site tRNA release.</text>
</comment>
<comment type="function">
    <text evidence="1">Protein L1 is also a translational repressor protein, it controls the translation of the L11 operon by binding to its mRNA.</text>
</comment>
<comment type="subunit">
    <text evidence="1">Part of the 50S ribosomal subunit.</text>
</comment>
<comment type="mass spectrometry" mass="23877.4" method="Electrospray" evidence="2"/>
<comment type="similarity">
    <text evidence="1">Belongs to the universal ribosomal protein uL1 family.</text>
</comment>
<evidence type="ECO:0000255" key="1">
    <source>
        <dbReference type="HAMAP-Rule" id="MF_01318"/>
    </source>
</evidence>
<evidence type="ECO:0000269" key="2">
    <source>
    </source>
</evidence>
<evidence type="ECO:0000305" key="3"/>
<dbReference type="EMBL" id="BX572603">
    <property type="protein sequence ID" value="CAE28713.1"/>
    <property type="molecule type" value="Genomic_DNA"/>
</dbReference>
<dbReference type="RefSeq" id="WP_011158815.1">
    <property type="nucleotide sequence ID" value="NZ_CP116810.1"/>
</dbReference>
<dbReference type="SMR" id="Q6N4R5"/>
<dbReference type="IntAct" id="Q6N4R5">
    <property type="interactions" value="1"/>
</dbReference>
<dbReference type="STRING" id="258594.RPA3272"/>
<dbReference type="GeneID" id="66894358"/>
<dbReference type="eggNOG" id="COG0081">
    <property type="taxonomic scope" value="Bacteria"/>
</dbReference>
<dbReference type="HOGENOM" id="CLU_062853_0_0_5"/>
<dbReference type="PhylomeDB" id="Q6N4R5"/>
<dbReference type="GO" id="GO:0022625">
    <property type="term" value="C:cytosolic large ribosomal subunit"/>
    <property type="evidence" value="ECO:0007669"/>
    <property type="project" value="TreeGrafter"/>
</dbReference>
<dbReference type="GO" id="GO:0019843">
    <property type="term" value="F:rRNA binding"/>
    <property type="evidence" value="ECO:0007669"/>
    <property type="project" value="UniProtKB-UniRule"/>
</dbReference>
<dbReference type="GO" id="GO:0003735">
    <property type="term" value="F:structural constituent of ribosome"/>
    <property type="evidence" value="ECO:0007669"/>
    <property type="project" value="InterPro"/>
</dbReference>
<dbReference type="GO" id="GO:0000049">
    <property type="term" value="F:tRNA binding"/>
    <property type="evidence" value="ECO:0007669"/>
    <property type="project" value="UniProtKB-KW"/>
</dbReference>
<dbReference type="GO" id="GO:0006417">
    <property type="term" value="P:regulation of translation"/>
    <property type="evidence" value="ECO:0007669"/>
    <property type="project" value="UniProtKB-KW"/>
</dbReference>
<dbReference type="GO" id="GO:0006412">
    <property type="term" value="P:translation"/>
    <property type="evidence" value="ECO:0007669"/>
    <property type="project" value="UniProtKB-UniRule"/>
</dbReference>
<dbReference type="CDD" id="cd00403">
    <property type="entry name" value="Ribosomal_L1"/>
    <property type="match status" value="1"/>
</dbReference>
<dbReference type="FunFam" id="3.40.50.790:FF:000001">
    <property type="entry name" value="50S ribosomal protein L1"/>
    <property type="match status" value="1"/>
</dbReference>
<dbReference type="Gene3D" id="3.30.190.20">
    <property type="match status" value="1"/>
</dbReference>
<dbReference type="Gene3D" id="3.40.50.790">
    <property type="match status" value="1"/>
</dbReference>
<dbReference type="HAMAP" id="MF_01318_B">
    <property type="entry name" value="Ribosomal_uL1_B"/>
    <property type="match status" value="1"/>
</dbReference>
<dbReference type="InterPro" id="IPR005878">
    <property type="entry name" value="Ribosom_uL1_bac-type"/>
</dbReference>
<dbReference type="InterPro" id="IPR002143">
    <property type="entry name" value="Ribosomal_uL1"/>
</dbReference>
<dbReference type="InterPro" id="IPR023674">
    <property type="entry name" value="Ribosomal_uL1-like"/>
</dbReference>
<dbReference type="InterPro" id="IPR028364">
    <property type="entry name" value="Ribosomal_uL1/biogenesis"/>
</dbReference>
<dbReference type="InterPro" id="IPR016095">
    <property type="entry name" value="Ribosomal_uL1_3-a/b-sand"/>
</dbReference>
<dbReference type="InterPro" id="IPR023673">
    <property type="entry name" value="Ribosomal_uL1_CS"/>
</dbReference>
<dbReference type="NCBIfam" id="TIGR01169">
    <property type="entry name" value="rplA_bact"/>
    <property type="match status" value="1"/>
</dbReference>
<dbReference type="PANTHER" id="PTHR36427">
    <property type="entry name" value="54S RIBOSOMAL PROTEIN L1, MITOCHONDRIAL"/>
    <property type="match status" value="1"/>
</dbReference>
<dbReference type="PANTHER" id="PTHR36427:SF3">
    <property type="entry name" value="LARGE RIBOSOMAL SUBUNIT PROTEIN UL1M"/>
    <property type="match status" value="1"/>
</dbReference>
<dbReference type="Pfam" id="PF00687">
    <property type="entry name" value="Ribosomal_L1"/>
    <property type="match status" value="1"/>
</dbReference>
<dbReference type="PIRSF" id="PIRSF002155">
    <property type="entry name" value="Ribosomal_L1"/>
    <property type="match status" value="1"/>
</dbReference>
<dbReference type="SUPFAM" id="SSF56808">
    <property type="entry name" value="Ribosomal protein L1"/>
    <property type="match status" value="1"/>
</dbReference>
<dbReference type="PROSITE" id="PS01199">
    <property type="entry name" value="RIBOSOMAL_L1"/>
    <property type="match status" value="1"/>
</dbReference>
<gene>
    <name evidence="1" type="primary">rplA</name>
    <name type="ordered locus">RPA3272</name>
</gene>